<accession>B3EWC6</accession>
<organism>
    <name type="scientific">Schizophyllum commune</name>
    <name type="common">Split gill fungus</name>
    <dbReference type="NCBI Taxonomy" id="5334"/>
    <lineage>
        <taxon>Eukaryota</taxon>
        <taxon>Fungi</taxon>
        <taxon>Dikarya</taxon>
        <taxon>Basidiomycota</taxon>
        <taxon>Agaricomycotina</taxon>
        <taxon>Agaricomycetes</taxon>
        <taxon>Agaricomycetidae</taxon>
        <taxon>Agaricales</taxon>
        <taxon>Schizophyllaceae</taxon>
        <taxon>Schizophyllum</taxon>
    </lineage>
</organism>
<protein>
    <recommendedName>
        <fullName evidence="2">Acid phosphatase</fullName>
        <ecNumber evidence="1">3.1.3.2</ecNumber>
    </recommendedName>
</protein>
<feature type="chain" id="PRO_0000415411" description="Acid phosphatase">
    <location>
        <begin position="1"/>
        <end position="10" status="greater than"/>
    </location>
</feature>
<feature type="non-terminal residue" evidence="2">
    <location>
        <position position="10"/>
    </location>
</feature>
<evidence type="ECO:0000269" key="1">
    <source>
    </source>
</evidence>
<evidence type="ECO:0000303" key="2">
    <source>
    </source>
</evidence>
<evidence type="ECO:0000305" key="3"/>
<sequence>NAPWAQIDEV</sequence>
<proteinExistence type="evidence at protein level"/>
<name>PPA_SCHCO</name>
<dbReference type="EC" id="3.1.3.2" evidence="1"/>
<dbReference type="BRENDA" id="3.1.3.2">
    <property type="organism ID" value="5611"/>
</dbReference>
<dbReference type="GO" id="GO:0003993">
    <property type="term" value="F:acid phosphatase activity"/>
    <property type="evidence" value="ECO:0000314"/>
    <property type="project" value="UniProtKB"/>
</dbReference>
<dbReference type="GO" id="GO:0016311">
    <property type="term" value="P:dephosphorylation"/>
    <property type="evidence" value="ECO:0000314"/>
    <property type="project" value="UniProtKB"/>
</dbReference>
<reference evidence="3" key="1">
    <citation type="journal article" date="2013" name="J. Basic Microbiol.">
        <title>Purification and characterization of a novel acid phosphatase from the split gill mushroom Schizophyllum commune.</title>
        <authorList>
            <person name="Zhang G.Q."/>
            <person name="Chen Q.J."/>
            <person name="Sun J."/>
            <person name="Wang H.X."/>
            <person name="Han C.H."/>
        </authorList>
    </citation>
    <scope>PROTEIN SEQUENCE</scope>
    <scope>CATALYTIC ACTIVITY</scope>
    <scope>ACTIVITY REGULATION</scope>
    <scope>BIOPHYSICOCHEMICAL PROPERTIES</scope>
    <scope>SUBUNIT</scope>
    <source>
        <strain evidence="1">0805</strain>
        <tissue evidence="1">Fruiting body</tissue>
    </source>
</reference>
<keyword id="KW-0903">Direct protein sequencing</keyword>
<keyword id="KW-0378">Hydrolase</keyword>
<comment type="catalytic activity">
    <reaction evidence="1">
        <text>a phosphate monoester + H2O = an alcohol + phosphate</text>
        <dbReference type="Rhea" id="RHEA:15017"/>
        <dbReference type="ChEBI" id="CHEBI:15377"/>
        <dbReference type="ChEBI" id="CHEBI:30879"/>
        <dbReference type="ChEBI" id="CHEBI:43474"/>
        <dbReference type="ChEBI" id="CHEBI:67140"/>
        <dbReference type="EC" id="3.1.3.2"/>
    </reaction>
</comment>
<comment type="activity regulation">
    <text evidence="1">Activated slightly by Co(2+), Ca(2+) and Mg(2+). Strongly inhibited by NaF, Fe(3+) and Al(3+), less so by tartrate, Cu(2+) and Hg(+). Not affected by EDTA, Fe(2+) and Zn(2+).</text>
</comment>
<comment type="biophysicochemical properties">
    <kinetics>
        <KM evidence="1">248 uM for para-nitrophenylphosphate (p-NPP)</KM>
        <Vmax evidence="1">9.0 nM/min/mg enzyme</Vmax>
    </kinetics>
    <phDependence>
        <text evidence="1">Optimum pH is 4.6. Activity decreases sharply with decreases and increases in pH and is absent at pH 8.0. When pre-incubated at different pH levels, activity is stable between pH 4 and 9.</text>
    </phDependence>
    <temperatureDependence>
        <text evidence="1">Optimum temperature is 50 degrees Celsius. Activity decreases sharply with decreases and increases in temperature. When pre-incubated at different temperatures, activity is stable between 20 and 50 degrees Celsius.</text>
    </temperatureDependence>
</comment>
<comment type="subunit">
    <text evidence="1">Monomer.</text>
</comment>
<comment type="miscellaneous">
    <text evidence="1">Has no activity towards sodium phytate, ATP, ADP, AMP, glucose-6-phosphate, fructose-6-phosphate and beta-glycerophosphate.</text>
</comment>